<comment type="function">
    <text evidence="1">The key enzymatic reactions in nitrogen fixation are catalyzed by the nitrogenase complex, which has 2 components: the iron protein and the molybdenum-iron protein.</text>
</comment>
<comment type="catalytic activity">
    <reaction>
        <text>N2 + 8 reduced [2Fe-2S]-[ferredoxin] + 16 ATP + 16 H2O = H2 + 8 oxidized [2Fe-2S]-[ferredoxin] + 2 NH4(+) + 16 ADP + 16 phosphate + 6 H(+)</text>
        <dbReference type="Rhea" id="RHEA:21448"/>
        <dbReference type="Rhea" id="RHEA-COMP:10000"/>
        <dbReference type="Rhea" id="RHEA-COMP:10001"/>
        <dbReference type="ChEBI" id="CHEBI:15377"/>
        <dbReference type="ChEBI" id="CHEBI:15378"/>
        <dbReference type="ChEBI" id="CHEBI:17997"/>
        <dbReference type="ChEBI" id="CHEBI:18276"/>
        <dbReference type="ChEBI" id="CHEBI:28938"/>
        <dbReference type="ChEBI" id="CHEBI:30616"/>
        <dbReference type="ChEBI" id="CHEBI:33737"/>
        <dbReference type="ChEBI" id="CHEBI:33738"/>
        <dbReference type="ChEBI" id="CHEBI:43474"/>
        <dbReference type="ChEBI" id="CHEBI:456216"/>
        <dbReference type="EC" id="1.18.6.1"/>
    </reaction>
</comment>
<comment type="cofactor">
    <cofactor evidence="1">
        <name>[4Fe-4S] cluster</name>
        <dbReference type="ChEBI" id="CHEBI:49883"/>
    </cofactor>
    <text evidence="1">Binds 1 [4Fe-4S] cluster per dimer.</text>
</comment>
<comment type="subunit">
    <text evidence="1">Homodimer.</text>
</comment>
<comment type="PTM">
    <text evidence="1">The reversible ADP-ribosylation of Arg-100 inactivates the nitrogenase reductase and regulates nitrogenase activity.</text>
</comment>
<comment type="similarity">
    <text evidence="3">Belongs to the NifH/BchL/ChlL family.</text>
</comment>
<gene>
    <name type="primary">nifH1</name>
    <name type="synonym">nifH</name>
    <name type="ordered locus">MTBMA_c01460</name>
</gene>
<name>NIFH1_METTM</name>
<feature type="chain" id="PRO_0000139546" description="Nitrogenase iron protein 1">
    <location>
        <begin position="1"/>
        <end position="275"/>
    </location>
</feature>
<feature type="binding site" evidence="2">
    <location>
        <begin position="9"/>
        <end position="16"/>
    </location>
    <ligand>
        <name>ATP</name>
        <dbReference type="ChEBI" id="CHEBI:30616"/>
    </ligand>
</feature>
<feature type="binding site" evidence="1">
    <location>
        <position position="97"/>
    </location>
    <ligand>
        <name>[4Fe-4S] cluster</name>
        <dbReference type="ChEBI" id="CHEBI:49883"/>
        <note>ligand shared between dimeric partners</note>
    </ligand>
</feature>
<feature type="binding site" evidence="1">
    <location>
        <position position="132"/>
    </location>
    <ligand>
        <name>[4Fe-4S] cluster</name>
        <dbReference type="ChEBI" id="CHEBI:49883"/>
        <note>ligand shared between dimeric partners</note>
    </ligand>
</feature>
<feature type="modified residue" description="ADP-ribosylarginine; by dinitrogenase reductase ADP-ribosyltransferase" evidence="1">
    <location>
        <position position="100"/>
    </location>
</feature>
<dbReference type="EC" id="1.18.6.1"/>
<dbReference type="EMBL" id="X87971">
    <property type="protein sequence ID" value="CAA61216.1"/>
    <property type="molecule type" value="Genomic_DNA"/>
</dbReference>
<dbReference type="EMBL" id="CP001710">
    <property type="protein sequence ID" value="ADL57755.1"/>
    <property type="molecule type" value="Genomic_DNA"/>
</dbReference>
<dbReference type="RefSeq" id="WP_013294983.1">
    <property type="nucleotide sequence ID" value="NC_014408.1"/>
</dbReference>
<dbReference type="SMR" id="Q50785"/>
<dbReference type="STRING" id="79929.MTBMA_c01460"/>
<dbReference type="PaxDb" id="79929-MTBMA_c01460"/>
<dbReference type="GeneID" id="43708174"/>
<dbReference type="GeneID" id="9703851"/>
<dbReference type="KEGG" id="mmg:MTBMA_c01460"/>
<dbReference type="PATRIC" id="fig|79929.8.peg.142"/>
<dbReference type="HOGENOM" id="CLU_059373_0_0_2"/>
<dbReference type="OrthoDB" id="145464at2157"/>
<dbReference type="Proteomes" id="UP000000345">
    <property type="component" value="Chromosome"/>
</dbReference>
<dbReference type="GO" id="GO:0051539">
    <property type="term" value="F:4 iron, 4 sulfur cluster binding"/>
    <property type="evidence" value="ECO:0007669"/>
    <property type="project" value="UniProtKB-KW"/>
</dbReference>
<dbReference type="GO" id="GO:0005524">
    <property type="term" value="F:ATP binding"/>
    <property type="evidence" value="ECO:0007669"/>
    <property type="project" value="UniProtKB-UniRule"/>
</dbReference>
<dbReference type="GO" id="GO:0046872">
    <property type="term" value="F:metal ion binding"/>
    <property type="evidence" value="ECO:0007669"/>
    <property type="project" value="UniProtKB-KW"/>
</dbReference>
<dbReference type="GO" id="GO:0016163">
    <property type="term" value="F:nitrogenase activity"/>
    <property type="evidence" value="ECO:0007669"/>
    <property type="project" value="UniProtKB-UniRule"/>
</dbReference>
<dbReference type="GO" id="GO:0009399">
    <property type="term" value="P:nitrogen fixation"/>
    <property type="evidence" value="ECO:0007669"/>
    <property type="project" value="UniProtKB-UniRule"/>
</dbReference>
<dbReference type="CDD" id="cd02040">
    <property type="entry name" value="NifH"/>
    <property type="match status" value="1"/>
</dbReference>
<dbReference type="Gene3D" id="3.40.50.300">
    <property type="entry name" value="P-loop containing nucleotide triphosphate hydrolases"/>
    <property type="match status" value="1"/>
</dbReference>
<dbReference type="HAMAP" id="MF_00533">
    <property type="entry name" value="NifH"/>
    <property type="match status" value="1"/>
</dbReference>
<dbReference type="InterPro" id="IPR030655">
    <property type="entry name" value="NifH/chlL_CS"/>
</dbReference>
<dbReference type="InterPro" id="IPR000392">
    <property type="entry name" value="NifH/frxC"/>
</dbReference>
<dbReference type="InterPro" id="IPR005977">
    <property type="entry name" value="Nitrogenase_Fe_NifH"/>
</dbReference>
<dbReference type="InterPro" id="IPR027417">
    <property type="entry name" value="P-loop_NTPase"/>
</dbReference>
<dbReference type="NCBIfam" id="TIGR01287">
    <property type="entry name" value="nifH"/>
    <property type="match status" value="1"/>
</dbReference>
<dbReference type="PANTHER" id="PTHR42864">
    <property type="entry name" value="LIGHT-INDEPENDENT PROTOCHLOROPHYLLIDE REDUCTASE IRON-SULFUR ATP-BINDING PROTEIN"/>
    <property type="match status" value="1"/>
</dbReference>
<dbReference type="PANTHER" id="PTHR42864:SF2">
    <property type="entry name" value="LIGHT-INDEPENDENT PROTOCHLOROPHYLLIDE REDUCTASE IRON-SULFUR ATP-BINDING PROTEIN"/>
    <property type="match status" value="1"/>
</dbReference>
<dbReference type="Pfam" id="PF00142">
    <property type="entry name" value="Fer4_NifH"/>
    <property type="match status" value="1"/>
</dbReference>
<dbReference type="PIRSF" id="PIRSF000363">
    <property type="entry name" value="Nitrogenase_iron"/>
    <property type="match status" value="1"/>
</dbReference>
<dbReference type="PRINTS" id="PR00091">
    <property type="entry name" value="NITROGNASEII"/>
</dbReference>
<dbReference type="SUPFAM" id="SSF52540">
    <property type="entry name" value="P-loop containing nucleoside triphosphate hydrolases"/>
    <property type="match status" value="1"/>
</dbReference>
<dbReference type="PROSITE" id="PS00746">
    <property type="entry name" value="NIFH_FRXC_1"/>
    <property type="match status" value="1"/>
</dbReference>
<dbReference type="PROSITE" id="PS00692">
    <property type="entry name" value="NIFH_FRXC_2"/>
    <property type="match status" value="1"/>
</dbReference>
<dbReference type="PROSITE" id="PS51026">
    <property type="entry name" value="NIFH_FRXC_3"/>
    <property type="match status" value="1"/>
</dbReference>
<sequence>MVRKIAIYGKGGIGKSTTQQNTAAAMSYFHGKNVMIHGCDPKADSTRLILGGKMQTTMMDTLRELGEGACTPDKVIETGFGGIRCVESGGPEPGVGCAGRGVITAITLMERHGVYENDLDFVFFDVLGDVVCGGFAMPVRDGKAEEIYIVASGEMMALYAANNICRGMVKYARQSGVRLGGIICNSRNVDGERELLEEFCERIGTQMIHFVPRDNIVQKAEFNKKSVIEFDPECNQSQEYRELARKIIENTDFVIPEPMTMDEMEDLVVKYGVLD</sequence>
<accession>Q50785</accession>
<accession>D9PU57</accession>
<evidence type="ECO:0000250" key="1"/>
<evidence type="ECO:0000255" key="2"/>
<evidence type="ECO:0000305" key="3"/>
<keyword id="KW-0004">4Fe-4S</keyword>
<keyword id="KW-0013">ADP-ribosylation</keyword>
<keyword id="KW-0067">ATP-binding</keyword>
<keyword id="KW-0408">Iron</keyword>
<keyword id="KW-0411">Iron-sulfur</keyword>
<keyword id="KW-0479">Metal-binding</keyword>
<keyword id="KW-0535">Nitrogen fixation</keyword>
<keyword id="KW-0547">Nucleotide-binding</keyword>
<keyword id="KW-0560">Oxidoreductase</keyword>
<reference key="1">
    <citation type="journal article" date="1995" name="Eur. J. Biochem.">
        <title>The tungsten formylmethanofuran dehydrogenase from Methanobacterium thermoautotrophicum contains sequence motifs characteristic for enzymes containing molybdopterin dinucleotide.</title>
        <authorList>
            <person name="Hochheimer A."/>
            <person name="Schmitz R.A."/>
            <person name="Thauer R.K."/>
            <person name="Hedderich R."/>
        </authorList>
    </citation>
    <scope>NUCLEOTIDE SEQUENCE [GENOMIC DNA]</scope>
    <source>
        <strain>ATCC BAA-927 / DSM 2133 / JCM 14651 / NBRC 100331 / OCM 82 / Marburg</strain>
    </source>
</reference>
<reference key="2">
    <citation type="journal article" date="2010" name="J. Bacteriol.">
        <title>Complete genome sequence of Methanothermobacter marburgensis, a methanoarchaeon model organism.</title>
        <authorList>
            <person name="Liesegang H."/>
            <person name="Kaster A.K."/>
            <person name="Wiezer A."/>
            <person name="Goenrich M."/>
            <person name="Wollherr A."/>
            <person name="Seedorf H."/>
            <person name="Gottschalk G."/>
            <person name="Thauer R.K."/>
        </authorList>
    </citation>
    <scope>NUCLEOTIDE SEQUENCE [LARGE SCALE GENOMIC DNA]</scope>
    <source>
        <strain>ATCC BAA-927 / DSM 2133 / JCM 14651 / NBRC 100331 / OCM 82 / Marburg</strain>
    </source>
</reference>
<organism>
    <name type="scientific">Methanothermobacter marburgensis (strain ATCC BAA-927 / DSM 2133 / JCM 14651 / NBRC 100331 / OCM 82 / Marburg)</name>
    <name type="common">Methanobacterium thermoautotrophicum</name>
    <dbReference type="NCBI Taxonomy" id="79929"/>
    <lineage>
        <taxon>Archaea</taxon>
        <taxon>Methanobacteriati</taxon>
        <taxon>Methanobacteriota</taxon>
        <taxon>Methanomada group</taxon>
        <taxon>Methanobacteria</taxon>
        <taxon>Methanobacteriales</taxon>
        <taxon>Methanobacteriaceae</taxon>
        <taxon>Methanothermobacter</taxon>
    </lineage>
</organism>
<proteinExistence type="inferred from homology"/>
<protein>
    <recommendedName>
        <fullName>Nitrogenase iron protein 1</fullName>
        <ecNumber>1.18.6.1</ecNumber>
    </recommendedName>
    <alternativeName>
        <fullName>Nitrogenase Fe protein 1</fullName>
    </alternativeName>
    <alternativeName>
        <fullName>Nitrogenase component II</fullName>
    </alternativeName>
    <alternativeName>
        <fullName>Nitrogenase reductase</fullName>
    </alternativeName>
</protein>